<keyword id="KW-0010">Activator</keyword>
<keyword id="KW-1005">Bacterial flagellum biogenesis</keyword>
<keyword id="KW-0963">Cytoplasm</keyword>
<keyword id="KW-1015">Disulfide bond</keyword>
<keyword id="KW-0238">DNA-binding</keyword>
<keyword id="KW-1185">Reference proteome</keyword>
<keyword id="KW-0804">Transcription</keyword>
<keyword id="KW-0805">Transcription regulation</keyword>
<reference key="1">
    <citation type="journal article" date="2005" name="Nucleic Acids Res.">
        <title>Genome dynamics and diversity of Shigella species, the etiologic agents of bacillary dysentery.</title>
        <authorList>
            <person name="Yang F."/>
            <person name="Yang J."/>
            <person name="Zhang X."/>
            <person name="Chen L."/>
            <person name="Jiang Y."/>
            <person name="Yan Y."/>
            <person name="Tang X."/>
            <person name="Wang J."/>
            <person name="Xiong Z."/>
            <person name="Dong J."/>
            <person name="Xue Y."/>
            <person name="Zhu Y."/>
            <person name="Xu X."/>
            <person name="Sun L."/>
            <person name="Chen S."/>
            <person name="Nie H."/>
            <person name="Peng J."/>
            <person name="Xu J."/>
            <person name="Wang Y."/>
            <person name="Yuan Z."/>
            <person name="Wen Y."/>
            <person name="Yao Z."/>
            <person name="Shen Y."/>
            <person name="Qiang B."/>
            <person name="Hou Y."/>
            <person name="Yu J."/>
            <person name="Jin Q."/>
        </authorList>
    </citation>
    <scope>NUCLEOTIDE SEQUENCE [LARGE SCALE GENOMIC DNA]</scope>
    <source>
        <strain>Sd197</strain>
    </source>
</reference>
<accession>Q32H60</accession>
<dbReference type="EMBL" id="CP000034">
    <property type="protein sequence ID" value="ABB61345.1"/>
    <property type="molecule type" value="Genomic_DNA"/>
</dbReference>
<dbReference type="RefSeq" id="YP_402836.1">
    <property type="nucleotide sequence ID" value="NC_007606.1"/>
</dbReference>
<dbReference type="SMR" id="Q32H60"/>
<dbReference type="STRING" id="300267.SDY_1191"/>
<dbReference type="EnsemblBacteria" id="ABB61345">
    <property type="protein sequence ID" value="ABB61345"/>
    <property type="gene ID" value="SDY_1191"/>
</dbReference>
<dbReference type="KEGG" id="sdy:SDY_1191"/>
<dbReference type="PATRIC" id="fig|300267.13.peg.1409"/>
<dbReference type="HOGENOM" id="CLU_144160_0_0_6"/>
<dbReference type="Proteomes" id="UP000002716">
    <property type="component" value="Chromosome"/>
</dbReference>
<dbReference type="GO" id="GO:0005737">
    <property type="term" value="C:cytoplasm"/>
    <property type="evidence" value="ECO:0007669"/>
    <property type="project" value="UniProtKB-SubCell"/>
</dbReference>
<dbReference type="GO" id="GO:0003677">
    <property type="term" value="F:DNA binding"/>
    <property type="evidence" value="ECO:0007669"/>
    <property type="project" value="UniProtKB-UniRule"/>
</dbReference>
<dbReference type="GO" id="GO:0044780">
    <property type="term" value="P:bacterial-type flagellum assembly"/>
    <property type="evidence" value="ECO:0007669"/>
    <property type="project" value="InterPro"/>
</dbReference>
<dbReference type="GO" id="GO:0045893">
    <property type="term" value="P:positive regulation of DNA-templated transcription"/>
    <property type="evidence" value="ECO:0007669"/>
    <property type="project" value="InterPro"/>
</dbReference>
<dbReference type="GO" id="GO:1902208">
    <property type="term" value="P:regulation of bacterial-type flagellum assembly"/>
    <property type="evidence" value="ECO:0007669"/>
    <property type="project" value="UniProtKB-UniRule"/>
</dbReference>
<dbReference type="FunFam" id="1.10.4000.10:FF:000001">
    <property type="entry name" value="Flagellar transcriptional regulator FlhD"/>
    <property type="match status" value="1"/>
</dbReference>
<dbReference type="Gene3D" id="1.10.4000.10">
    <property type="entry name" value="Flagellar transcriptional activator FlhD"/>
    <property type="match status" value="1"/>
</dbReference>
<dbReference type="HAMAP" id="MF_00725">
    <property type="entry name" value="FlhD"/>
    <property type="match status" value="1"/>
</dbReference>
<dbReference type="InterPro" id="IPR023559">
    <property type="entry name" value="Flagellar_FlhD"/>
</dbReference>
<dbReference type="InterPro" id="IPR036194">
    <property type="entry name" value="FlhD_sf"/>
</dbReference>
<dbReference type="NCBIfam" id="NF002783">
    <property type="entry name" value="PRK02909.1-1"/>
    <property type="match status" value="1"/>
</dbReference>
<dbReference type="Pfam" id="PF05247">
    <property type="entry name" value="FlhD"/>
    <property type="match status" value="1"/>
</dbReference>
<dbReference type="SUPFAM" id="SSF63592">
    <property type="entry name" value="Flagellar transcriptional activator FlhD"/>
    <property type="match status" value="1"/>
</dbReference>
<sequence>MGIMHTSELLKHIYDINLSYLLLAQRLIVQDKASAMFRLGINEEMATTLAALTLPQMVKLAETNQLVCHFRFDSHQTITQLTQDSRVDDLQQIHTGIMLSTRLLNDVNQPEEALRKKRA</sequence>
<gene>
    <name evidence="1" type="primary">flhD</name>
    <name type="ordered locus">SDY_1191</name>
</gene>
<organism>
    <name type="scientific">Shigella dysenteriae serotype 1 (strain Sd197)</name>
    <dbReference type="NCBI Taxonomy" id="300267"/>
    <lineage>
        <taxon>Bacteria</taxon>
        <taxon>Pseudomonadati</taxon>
        <taxon>Pseudomonadota</taxon>
        <taxon>Gammaproteobacteria</taxon>
        <taxon>Enterobacterales</taxon>
        <taxon>Enterobacteriaceae</taxon>
        <taxon>Shigella</taxon>
    </lineage>
</organism>
<protein>
    <recommendedName>
        <fullName evidence="1">Flagellar transcriptional regulator FlhD</fullName>
    </recommendedName>
</protein>
<name>FLHD_SHIDS</name>
<comment type="function">
    <text evidence="1">Functions in complex with FlhC as a master transcriptional regulator that regulates transcription of several flagellar and non-flagellar operons by binding to their promoter region. Activates expression of class 2 flagellar genes, including fliA, which is a flagellum-specific sigma factor that turns on the class 3 genes. Also regulates genes whose products function in a variety of physiological pathways.</text>
</comment>
<comment type="subunit">
    <text evidence="1">Homodimer; disulfide-linked. Forms a heterohexamer composed of two FlhC and four FlhD subunits. Each FlhC binds a FlhD dimer, forming a heterotrimer, and a hexamer assembles by dimerization of two heterotrimers.</text>
</comment>
<comment type="subcellular location">
    <subcellularLocation>
        <location evidence="1">Cytoplasm</location>
    </subcellularLocation>
</comment>
<comment type="domain">
    <text evidence="1">The C-terminal region contains a putative helix-turn-helix (HTH) motif, suggesting that this region may bind DNA.</text>
</comment>
<comment type="similarity">
    <text evidence="1">Belongs to the FlhD family.</text>
</comment>
<proteinExistence type="inferred from homology"/>
<evidence type="ECO:0000255" key="1">
    <source>
        <dbReference type="HAMAP-Rule" id="MF_00725"/>
    </source>
</evidence>
<feature type="chain" id="PRO_1000062103" description="Flagellar transcriptional regulator FlhD">
    <location>
        <begin position="1"/>
        <end position="119"/>
    </location>
</feature>
<feature type="disulfide bond" description="Interchain" evidence="1">
    <location>
        <position position="68"/>
    </location>
</feature>